<organism>
    <name type="scientific">Oryza sativa subsp. japonica</name>
    <name type="common">Rice</name>
    <dbReference type="NCBI Taxonomy" id="39947"/>
    <lineage>
        <taxon>Eukaryota</taxon>
        <taxon>Viridiplantae</taxon>
        <taxon>Streptophyta</taxon>
        <taxon>Embryophyta</taxon>
        <taxon>Tracheophyta</taxon>
        <taxon>Spermatophyta</taxon>
        <taxon>Magnoliopsida</taxon>
        <taxon>Liliopsida</taxon>
        <taxon>Poales</taxon>
        <taxon>Poaceae</taxon>
        <taxon>BOP clade</taxon>
        <taxon>Oryzoideae</taxon>
        <taxon>Oryzeae</taxon>
        <taxon>Oryzinae</taxon>
        <taxon>Oryza</taxon>
        <taxon>Oryza sativa</taxon>
    </lineage>
</organism>
<gene>
    <name type="primary">TULP11</name>
    <name type="synonym">TULP7</name>
    <name type="ordered locus">Os07g0667000</name>
    <name type="ordered locus">LOC_Os07g47110</name>
    <name type="ORF">OsJ_25493</name>
    <name type="ORF">P0450A04.125</name>
</gene>
<sequence>MSFRSVIQEVKGEIGAISRRGFRSRPGRVRRVAAAAEEPPDESSAAALVMRESCWTQLPPELLREVLARVEESEGWWPRRRDVVACAGVCRSWRGIVREIVRTPEASGNLTFPISLKQPGPRDAPMKCFIVRNRTTQTYYLYIGLTDALTDDGKFLLAARKCRRTTCTEYLISLDMNDISKRTDSYVGKLRSNFLGTKFTIYDAHPPYAGDVISKGQSARVIGSNHLSPRIPAGNYPVSHISYELNVLGSRGPRRMHCAMDSIPVSAIEQGGTAPTQTEFPLSYHESFTSIPFFKSKSVRANNSTASLLTQNGSKLVLKNKSPRWHEHLQCWCLNFHGRVTVASVKNFQLVASDESNPTNQEHDDVILQFGKVGKDMFTMDYRYPISAFQAFAICLSSFDTKIACE</sequence>
<comment type="tissue specificity">
    <text evidence="1">Ubiquitous.</text>
</comment>
<comment type="similarity">
    <text evidence="2">Belongs to the TUB family.</text>
</comment>
<keyword id="KW-1185">Reference proteome</keyword>
<feature type="chain" id="PRO_0000351130" description="Tubby-like F-box protein 11">
    <location>
        <begin position="1"/>
        <end position="406"/>
    </location>
</feature>
<feature type="domain" description="F-box">
    <location>
        <begin position="53"/>
        <end position="108"/>
    </location>
</feature>
<evidence type="ECO:0000269" key="1">
    <source>
    </source>
</evidence>
<evidence type="ECO:0000305" key="2"/>
<name>TLP11_ORYSJ</name>
<accession>Q8H485</accession>
<accession>A0A0P0XA31</accession>
<accession>A3BN69</accession>
<accession>B7E558</accession>
<reference key="1">
    <citation type="journal article" date="2005" name="Nature">
        <title>The map-based sequence of the rice genome.</title>
        <authorList>
            <consortium name="International rice genome sequencing project (IRGSP)"/>
        </authorList>
    </citation>
    <scope>NUCLEOTIDE SEQUENCE [LARGE SCALE GENOMIC DNA]</scope>
    <source>
        <strain>cv. Nipponbare</strain>
    </source>
</reference>
<reference key="2">
    <citation type="journal article" date="2008" name="Nucleic Acids Res.">
        <title>The rice annotation project database (RAP-DB): 2008 update.</title>
        <authorList>
            <consortium name="The rice annotation project (RAP)"/>
        </authorList>
    </citation>
    <scope>GENOME REANNOTATION</scope>
    <source>
        <strain>cv. Nipponbare</strain>
    </source>
</reference>
<reference key="3">
    <citation type="journal article" date="2013" name="Rice">
        <title>Improvement of the Oryza sativa Nipponbare reference genome using next generation sequence and optical map data.</title>
        <authorList>
            <person name="Kawahara Y."/>
            <person name="de la Bastide M."/>
            <person name="Hamilton J.P."/>
            <person name="Kanamori H."/>
            <person name="McCombie W.R."/>
            <person name="Ouyang S."/>
            <person name="Schwartz D.C."/>
            <person name="Tanaka T."/>
            <person name="Wu J."/>
            <person name="Zhou S."/>
            <person name="Childs K.L."/>
            <person name="Davidson R.M."/>
            <person name="Lin H."/>
            <person name="Quesada-Ocampo L."/>
            <person name="Vaillancourt B."/>
            <person name="Sakai H."/>
            <person name="Lee S.S."/>
            <person name="Kim J."/>
            <person name="Numa H."/>
            <person name="Itoh T."/>
            <person name="Buell C.R."/>
            <person name="Matsumoto T."/>
        </authorList>
    </citation>
    <scope>GENOME REANNOTATION</scope>
    <source>
        <strain>cv. Nipponbare</strain>
    </source>
</reference>
<reference key="4">
    <citation type="journal article" date="2005" name="PLoS Biol.">
        <title>The genomes of Oryza sativa: a history of duplications.</title>
        <authorList>
            <person name="Yu J."/>
            <person name="Wang J."/>
            <person name="Lin W."/>
            <person name="Li S."/>
            <person name="Li H."/>
            <person name="Zhou J."/>
            <person name="Ni P."/>
            <person name="Dong W."/>
            <person name="Hu S."/>
            <person name="Zeng C."/>
            <person name="Zhang J."/>
            <person name="Zhang Y."/>
            <person name="Li R."/>
            <person name="Xu Z."/>
            <person name="Li S."/>
            <person name="Li X."/>
            <person name="Zheng H."/>
            <person name="Cong L."/>
            <person name="Lin L."/>
            <person name="Yin J."/>
            <person name="Geng J."/>
            <person name="Li G."/>
            <person name="Shi J."/>
            <person name="Liu J."/>
            <person name="Lv H."/>
            <person name="Li J."/>
            <person name="Wang J."/>
            <person name="Deng Y."/>
            <person name="Ran L."/>
            <person name="Shi X."/>
            <person name="Wang X."/>
            <person name="Wu Q."/>
            <person name="Li C."/>
            <person name="Ren X."/>
            <person name="Wang J."/>
            <person name="Wang X."/>
            <person name="Li D."/>
            <person name="Liu D."/>
            <person name="Zhang X."/>
            <person name="Ji Z."/>
            <person name="Zhao W."/>
            <person name="Sun Y."/>
            <person name="Zhang Z."/>
            <person name="Bao J."/>
            <person name="Han Y."/>
            <person name="Dong L."/>
            <person name="Ji J."/>
            <person name="Chen P."/>
            <person name="Wu S."/>
            <person name="Liu J."/>
            <person name="Xiao Y."/>
            <person name="Bu D."/>
            <person name="Tan J."/>
            <person name="Yang L."/>
            <person name="Ye C."/>
            <person name="Zhang J."/>
            <person name="Xu J."/>
            <person name="Zhou Y."/>
            <person name="Yu Y."/>
            <person name="Zhang B."/>
            <person name="Zhuang S."/>
            <person name="Wei H."/>
            <person name="Liu B."/>
            <person name="Lei M."/>
            <person name="Yu H."/>
            <person name="Li Y."/>
            <person name="Xu H."/>
            <person name="Wei S."/>
            <person name="He X."/>
            <person name="Fang L."/>
            <person name="Zhang Z."/>
            <person name="Zhang Y."/>
            <person name="Huang X."/>
            <person name="Su Z."/>
            <person name="Tong W."/>
            <person name="Li J."/>
            <person name="Tong Z."/>
            <person name="Li S."/>
            <person name="Ye J."/>
            <person name="Wang L."/>
            <person name="Fang L."/>
            <person name="Lei T."/>
            <person name="Chen C.-S."/>
            <person name="Chen H.-C."/>
            <person name="Xu Z."/>
            <person name="Li H."/>
            <person name="Huang H."/>
            <person name="Zhang F."/>
            <person name="Xu H."/>
            <person name="Li N."/>
            <person name="Zhao C."/>
            <person name="Li S."/>
            <person name="Dong L."/>
            <person name="Huang Y."/>
            <person name="Li L."/>
            <person name="Xi Y."/>
            <person name="Qi Q."/>
            <person name="Li W."/>
            <person name="Zhang B."/>
            <person name="Hu W."/>
            <person name="Zhang Y."/>
            <person name="Tian X."/>
            <person name="Jiao Y."/>
            <person name="Liang X."/>
            <person name="Jin J."/>
            <person name="Gao L."/>
            <person name="Zheng W."/>
            <person name="Hao B."/>
            <person name="Liu S.-M."/>
            <person name="Wang W."/>
            <person name="Yuan L."/>
            <person name="Cao M."/>
            <person name="McDermott J."/>
            <person name="Samudrala R."/>
            <person name="Wang J."/>
            <person name="Wong G.K.-S."/>
            <person name="Yang H."/>
        </authorList>
    </citation>
    <scope>NUCLEOTIDE SEQUENCE [LARGE SCALE GENOMIC DNA]</scope>
    <source>
        <strain>cv. Nipponbare</strain>
    </source>
</reference>
<reference key="5">
    <citation type="journal article" date="2003" name="Science">
        <title>Collection, mapping, and annotation of over 28,000 cDNA clones from japonica rice.</title>
        <authorList>
            <consortium name="The rice full-length cDNA consortium"/>
        </authorList>
    </citation>
    <scope>NUCLEOTIDE SEQUENCE [LARGE SCALE MRNA]</scope>
    <source>
        <strain>cv. Nipponbare</strain>
    </source>
</reference>
<reference key="6">
    <citation type="journal article" date="2008" name="FEBS J.">
        <title>Identification of rice TUBBY-like genes and their evolution.</title>
        <authorList>
            <person name="Liu Q."/>
        </authorList>
    </citation>
    <scope>GENE FAMILY</scope>
    <scope>NOMENCLATURE</scope>
</reference>
<reference key="7">
    <citation type="journal article" date="2008" name="Genomics">
        <title>Genomewide comparative phylogenetic and molecular evolutionary analysis of tubby-like protein family in Arabidopsis, rice, and poplar.</title>
        <authorList>
            <person name="Yang Z."/>
            <person name="Zhou Y."/>
            <person name="Wang X."/>
            <person name="Gu S."/>
            <person name="Yu J."/>
            <person name="Liang G."/>
            <person name="Yan C."/>
            <person name="Xu C."/>
        </authorList>
    </citation>
    <scope>TISSUE SPECIFICITY</scope>
    <scope>GENE FAMILY</scope>
    <scope>NOMENCLATURE</scope>
</reference>
<protein>
    <recommendedName>
        <fullName>Tubby-like F-box protein 11</fullName>
        <shortName>OsTLP11</shortName>
    </recommendedName>
    <alternativeName>
        <fullName>Tubby-like F-box protein 7</fullName>
        <shortName>OsTLP7</shortName>
    </alternativeName>
</protein>
<proteinExistence type="evidence at transcript level"/>
<dbReference type="EMBL" id="AP004274">
    <property type="protein sequence ID" value="BAC20077.1"/>
    <property type="molecule type" value="Genomic_DNA"/>
</dbReference>
<dbReference type="EMBL" id="AP008213">
    <property type="protein sequence ID" value="BAF22486.1"/>
    <property type="molecule type" value="Genomic_DNA"/>
</dbReference>
<dbReference type="EMBL" id="AP014963">
    <property type="protein sequence ID" value="BAT03110.1"/>
    <property type="molecule type" value="Genomic_DNA"/>
</dbReference>
<dbReference type="EMBL" id="CM000144">
    <property type="protein sequence ID" value="EEE67772.1"/>
    <property type="molecule type" value="Genomic_DNA"/>
</dbReference>
<dbReference type="EMBL" id="AK060587">
    <property type="protein sequence ID" value="BAG87505.1"/>
    <property type="molecule type" value="mRNA"/>
</dbReference>
<dbReference type="EMBL" id="AK071159">
    <property type="protein sequence ID" value="BAG92344.1"/>
    <property type="molecule type" value="mRNA"/>
</dbReference>
<dbReference type="RefSeq" id="XP_015644710.1">
    <property type="nucleotide sequence ID" value="XM_015789224.1"/>
</dbReference>
<dbReference type="SMR" id="Q8H485"/>
<dbReference type="FunCoup" id="Q8H485">
    <property type="interactions" value="2158"/>
</dbReference>
<dbReference type="STRING" id="39947.Q8H485"/>
<dbReference type="PaxDb" id="39947-Q8H485"/>
<dbReference type="EnsemblPlants" id="Os07t0667000-01">
    <property type="protein sequence ID" value="Os07t0667000-01"/>
    <property type="gene ID" value="Os07g0667000"/>
</dbReference>
<dbReference type="EnsemblPlants" id="Os07t0667000-02">
    <property type="protein sequence ID" value="Os07t0667000-02"/>
    <property type="gene ID" value="Os07g0667000"/>
</dbReference>
<dbReference type="Gramene" id="Os07t0667000-01">
    <property type="protein sequence ID" value="Os07t0667000-01"/>
    <property type="gene ID" value="Os07g0667000"/>
</dbReference>
<dbReference type="Gramene" id="Os07t0667000-02">
    <property type="protein sequence ID" value="Os07t0667000-02"/>
    <property type="gene ID" value="Os07g0667000"/>
</dbReference>
<dbReference type="KEGG" id="dosa:Os07g0667000"/>
<dbReference type="eggNOG" id="KOG2502">
    <property type="taxonomic scope" value="Eukaryota"/>
</dbReference>
<dbReference type="HOGENOM" id="CLU_028236_3_0_1"/>
<dbReference type="InParanoid" id="Q8H485"/>
<dbReference type="OMA" id="GPIETQR"/>
<dbReference type="OrthoDB" id="8775810at2759"/>
<dbReference type="Proteomes" id="UP000000763">
    <property type="component" value="Chromosome 7"/>
</dbReference>
<dbReference type="Proteomes" id="UP000007752">
    <property type="component" value="Chromosome 7"/>
</dbReference>
<dbReference type="Proteomes" id="UP000059680">
    <property type="component" value="Chromosome 7"/>
</dbReference>
<dbReference type="CDD" id="cd22153">
    <property type="entry name" value="F-box_AtTLP-like"/>
    <property type="match status" value="1"/>
</dbReference>
<dbReference type="FunFam" id="3.20.90.10:FF:000003">
    <property type="entry name" value="Tubby-like F-box protein"/>
    <property type="match status" value="1"/>
</dbReference>
<dbReference type="Gene3D" id="1.20.1280.50">
    <property type="match status" value="1"/>
</dbReference>
<dbReference type="Gene3D" id="3.20.90.10">
    <property type="entry name" value="Tubby Protein, Chain A"/>
    <property type="match status" value="1"/>
</dbReference>
<dbReference type="InterPro" id="IPR036047">
    <property type="entry name" value="F-box-like_dom_sf"/>
</dbReference>
<dbReference type="InterPro" id="IPR001810">
    <property type="entry name" value="F-box_dom"/>
</dbReference>
<dbReference type="InterPro" id="IPR025659">
    <property type="entry name" value="Tubby-like_C"/>
</dbReference>
<dbReference type="InterPro" id="IPR000007">
    <property type="entry name" value="Tubby_C"/>
</dbReference>
<dbReference type="InterPro" id="IPR018066">
    <property type="entry name" value="Tubby_C_CS"/>
</dbReference>
<dbReference type="PANTHER" id="PTHR16517:SF107">
    <property type="entry name" value="TUBBY-LIKE F-BOX PROTEIN 11"/>
    <property type="match status" value="1"/>
</dbReference>
<dbReference type="PANTHER" id="PTHR16517">
    <property type="entry name" value="TUBBY-RELATED"/>
    <property type="match status" value="1"/>
</dbReference>
<dbReference type="Pfam" id="PF00646">
    <property type="entry name" value="F-box"/>
    <property type="match status" value="1"/>
</dbReference>
<dbReference type="Pfam" id="PF01167">
    <property type="entry name" value="Tub"/>
    <property type="match status" value="1"/>
</dbReference>
<dbReference type="PRINTS" id="PR01573">
    <property type="entry name" value="SUPERTUBBY"/>
</dbReference>
<dbReference type="SUPFAM" id="SSF81383">
    <property type="entry name" value="F-box domain"/>
    <property type="match status" value="1"/>
</dbReference>
<dbReference type="SUPFAM" id="SSF54518">
    <property type="entry name" value="Tubby C-terminal domain-like"/>
    <property type="match status" value="1"/>
</dbReference>
<dbReference type="PROSITE" id="PS01200">
    <property type="entry name" value="TUB_1"/>
    <property type="match status" value="1"/>
</dbReference>
<dbReference type="PROSITE" id="PS01201">
    <property type="entry name" value="TUB_2"/>
    <property type="match status" value="1"/>
</dbReference>